<feature type="chain" id="PRO_0000249066" description="2-acylglycerol O-acyltransferase 2">
    <location>
        <begin position="1"/>
        <end position="335"/>
    </location>
</feature>
<feature type="transmembrane region" description="Helical" evidence="3">
    <location>
        <begin position="24"/>
        <end position="44"/>
    </location>
</feature>
<feature type="transmembrane region" description="Helical" evidence="3">
    <location>
        <begin position="104"/>
        <end position="124"/>
    </location>
</feature>
<feature type="glycosylation site" description="N-linked (GlcNAc...) asparagine" evidence="3">
    <location>
        <position position="206"/>
    </location>
</feature>
<organism>
    <name type="scientific">Xenopus tropicalis</name>
    <name type="common">Western clawed frog</name>
    <name type="synonym">Silurana tropicalis</name>
    <dbReference type="NCBI Taxonomy" id="8364"/>
    <lineage>
        <taxon>Eukaryota</taxon>
        <taxon>Metazoa</taxon>
        <taxon>Chordata</taxon>
        <taxon>Craniata</taxon>
        <taxon>Vertebrata</taxon>
        <taxon>Euteleostomi</taxon>
        <taxon>Amphibia</taxon>
        <taxon>Batrachia</taxon>
        <taxon>Anura</taxon>
        <taxon>Pipoidea</taxon>
        <taxon>Pipidae</taxon>
        <taxon>Xenopodinae</taxon>
        <taxon>Xenopus</taxon>
        <taxon>Silurana</taxon>
    </lineage>
</organism>
<keyword id="KW-0012">Acyltransferase</keyword>
<keyword id="KW-0963">Cytoplasm</keyword>
<keyword id="KW-0256">Endoplasmic reticulum</keyword>
<keyword id="KW-0319">Glycerol metabolism</keyword>
<keyword id="KW-0325">Glycoprotein</keyword>
<keyword id="KW-0444">Lipid biosynthesis</keyword>
<keyword id="KW-0443">Lipid metabolism</keyword>
<keyword id="KW-0472">Membrane</keyword>
<keyword id="KW-1185">Reference proteome</keyword>
<keyword id="KW-0808">Transferase</keyword>
<keyword id="KW-0812">Transmembrane</keyword>
<keyword id="KW-1133">Transmembrane helix</keyword>
<comment type="function">
    <text evidence="1 2">Involved in glycerolipid synthesis and lipid metabolism. Catalyzes the formation of diacylglycerol, the precursor of triacylglycerol, by transferring the acyl chain of a fatty acyl-CoA to a monoacylglycerol (By similarity). Plays a central role in absorption of dietary fat in the small intestine by catalyzing the resynthesis of triacylglycerol in enterocytes (By similarity). Has a preference toward monoacylglycerols containing unsaturated fatty acids in an order of C18:3 &gt; C18:2 &gt; C18:1 &gt; C18:0 at sn-2. Able to use 1-monoalkylglycerol (1-MAkG, 1-O-alkylglycerol) as an acyl acceptor for the synthesis of monoalkyl-monoacylglycerol (MAMAG, 1-O-alkyl-3-acylglycerol or 1-O-alkyl-2-acylglycerol) and subsequently, with lower efficiency, may add another acyl chain producing monoalkyl-diacylglycerol (MADAG, 1-O-alkyl-2,3-diacylglycerol). Possesses weak but significant activity with diacylglycerol as substrate, producing triacylglycerol (triacyl-sn-glycerol) (By similarity).</text>
</comment>
<comment type="catalytic activity">
    <reaction evidence="1">
        <text>a 2-acylglycerol + an acyl-CoA = a 1,2-diacylglycerol + CoA</text>
        <dbReference type="Rhea" id="RHEA:16741"/>
        <dbReference type="ChEBI" id="CHEBI:17389"/>
        <dbReference type="ChEBI" id="CHEBI:49172"/>
        <dbReference type="ChEBI" id="CHEBI:57287"/>
        <dbReference type="ChEBI" id="CHEBI:58342"/>
        <dbReference type="EC" id="2.3.1.22"/>
    </reaction>
    <physiologicalReaction direction="left-to-right" evidence="1">
        <dbReference type="Rhea" id="RHEA:16742"/>
    </physiologicalReaction>
</comment>
<comment type="catalytic activity">
    <reaction evidence="1">
        <text>a 2-acylglycerol + an acyl-CoA = a 1,2-diacyl-sn-glycerol + CoA</text>
        <dbReference type="Rhea" id="RHEA:32947"/>
        <dbReference type="ChEBI" id="CHEBI:17389"/>
        <dbReference type="ChEBI" id="CHEBI:17815"/>
        <dbReference type="ChEBI" id="CHEBI:57287"/>
        <dbReference type="ChEBI" id="CHEBI:58342"/>
    </reaction>
    <physiologicalReaction direction="left-to-right" evidence="1">
        <dbReference type="Rhea" id="RHEA:32948"/>
    </physiologicalReaction>
</comment>
<comment type="catalytic activity">
    <reaction evidence="1">
        <text>a 2-acylglycerol + an acyl-CoA = a 2,3-diacyl-sn-glycerol + CoA</text>
        <dbReference type="Rhea" id="RHEA:38467"/>
        <dbReference type="ChEBI" id="CHEBI:17389"/>
        <dbReference type="ChEBI" id="CHEBI:57287"/>
        <dbReference type="ChEBI" id="CHEBI:58342"/>
        <dbReference type="ChEBI" id="CHEBI:75524"/>
    </reaction>
    <physiologicalReaction direction="left-to-right" evidence="1">
        <dbReference type="Rhea" id="RHEA:38468"/>
    </physiologicalReaction>
</comment>
<comment type="catalytic activity">
    <reaction evidence="1">
        <text>a 1-acylglycerol + an acyl-CoA = a 1,2-diacylglycerol + CoA</text>
        <dbReference type="Rhea" id="RHEA:39943"/>
        <dbReference type="ChEBI" id="CHEBI:35759"/>
        <dbReference type="ChEBI" id="CHEBI:49172"/>
        <dbReference type="ChEBI" id="CHEBI:57287"/>
        <dbReference type="ChEBI" id="CHEBI:58342"/>
    </reaction>
    <physiologicalReaction direction="left-to-right" evidence="1">
        <dbReference type="Rhea" id="RHEA:39944"/>
    </physiologicalReaction>
</comment>
<comment type="catalytic activity">
    <reaction evidence="1">
        <text>a 1-acylglycerol + an acyl-CoA = a 1,3-diacylglycerol + CoA</text>
        <dbReference type="Rhea" id="RHEA:77571"/>
        <dbReference type="ChEBI" id="CHEBI:35759"/>
        <dbReference type="ChEBI" id="CHEBI:47777"/>
        <dbReference type="ChEBI" id="CHEBI:57287"/>
        <dbReference type="ChEBI" id="CHEBI:58342"/>
    </reaction>
    <physiologicalReaction direction="left-to-right" evidence="1">
        <dbReference type="Rhea" id="RHEA:77572"/>
    </physiologicalReaction>
</comment>
<comment type="catalytic activity">
    <reaction evidence="1">
        <text>1-O-alkylglycerol + an acyl-CoA = 1-O-alkyl-3-acylglycerol + CoA</text>
        <dbReference type="Rhea" id="RHEA:77627"/>
        <dbReference type="ChEBI" id="CHEBI:57287"/>
        <dbReference type="ChEBI" id="CHEBI:58342"/>
        <dbReference type="ChEBI" id="CHEBI:76225"/>
        <dbReference type="ChEBI" id="CHEBI:77997"/>
    </reaction>
    <physiologicalReaction direction="left-to-right" evidence="1">
        <dbReference type="Rhea" id="RHEA:77628"/>
    </physiologicalReaction>
</comment>
<comment type="catalytic activity">
    <reaction evidence="1">
        <text>an acyl-CoA + a 1,2-diacyl-sn-glycerol = a triacyl-sn-glycerol + CoA</text>
        <dbReference type="Rhea" id="RHEA:10868"/>
        <dbReference type="ChEBI" id="CHEBI:17815"/>
        <dbReference type="ChEBI" id="CHEBI:57287"/>
        <dbReference type="ChEBI" id="CHEBI:58342"/>
        <dbReference type="ChEBI" id="CHEBI:64615"/>
        <dbReference type="EC" id="2.3.1.20"/>
    </reaction>
    <physiologicalReaction direction="left-to-right" evidence="1">
        <dbReference type="Rhea" id="RHEA:10869"/>
    </physiologicalReaction>
</comment>
<comment type="pathway">
    <text>Glycerolipid metabolism; triacylglycerol biosynthesis.</text>
</comment>
<comment type="subcellular location">
    <subcellularLocation>
        <location evidence="1">Endoplasmic reticulum membrane</location>
        <topology evidence="1">Multi-pass membrane protein</topology>
    </subcellularLocation>
    <subcellularLocation>
        <location evidence="1">Cytoplasm</location>
        <location evidence="1">Perinuclear region</location>
    </subcellularLocation>
</comment>
<comment type="similarity">
    <text evidence="4">Belongs to the diacylglycerol acyltransferase family.</text>
</comment>
<protein>
    <recommendedName>
        <fullName>2-acylglycerol O-acyltransferase 2</fullName>
        <ecNumber evidence="1">2.3.1.20</ecNumber>
        <ecNumber evidence="1">2.3.1.22</ecNumber>
    </recommendedName>
    <alternativeName>
        <fullName>Acyl-CoA:monoacylglycerol acyltransferase 2</fullName>
        <shortName>MGAT2</shortName>
    </alternativeName>
    <alternativeName>
        <fullName>Monoacylglycerol O-acyltransferase 2</fullName>
    </alternativeName>
</protein>
<accession>Q5M8H5</accession>
<name>MOGT2_XENTR</name>
<reference key="1">
    <citation type="submission" date="2004-12" db="EMBL/GenBank/DDBJ databases">
        <authorList>
            <consortium name="NIH - Xenopus Gene Collection (XGC) project"/>
        </authorList>
    </citation>
    <scope>NUCLEOTIDE SEQUENCE [LARGE SCALE MRNA]</scope>
</reference>
<gene>
    <name type="primary">mogat2</name>
</gene>
<sequence>MWIHFAPLKIPFSRRLQTGAVLQWAVSFLAMAQCCIALYILLLFSRYWYLAVLYGVWLYIDWDTPSKGGRRSNWVRSWTVWKYFAEYFPIKLLCTAPLDPKYNYIMGFHPHGVLVVGAFGNFCTEGTGFSRLFPGLTPHLLMLPAWFRVPFFREYIMSGSLVSSDRSSAHHLLSQKSGGQALVIAVGGPPEALDAKPGELTLQLLNRTGFIKMALTHGAHLVPVLSFGENDLYNQVNNPRGSLLRATQEKLQKIFGIALPLFHGRGVFQYSWGLLPHRRPIYTVVGSPIHVTKTPCPTREQISSLHSLYIAKLRDLFETHKGNYGIPEDRSLVLC</sequence>
<proteinExistence type="evidence at transcript level"/>
<dbReference type="EC" id="2.3.1.20" evidence="1"/>
<dbReference type="EC" id="2.3.1.22" evidence="1"/>
<dbReference type="EMBL" id="BC088019">
    <property type="protein sequence ID" value="AAH88019.1"/>
    <property type="molecule type" value="mRNA"/>
</dbReference>
<dbReference type="RefSeq" id="NP_001011301.1">
    <property type="nucleotide sequence ID" value="NM_001011301.1"/>
</dbReference>
<dbReference type="STRING" id="8364.ENSXETP00000012154"/>
<dbReference type="GlyCosmos" id="Q5M8H5">
    <property type="glycosylation" value="1 site, No reported glycans"/>
</dbReference>
<dbReference type="PaxDb" id="8364-ENSXETP00000008697"/>
<dbReference type="GeneID" id="496754"/>
<dbReference type="KEGG" id="xtr:496754"/>
<dbReference type="AGR" id="Xenbase:XB-GENE-6040330"/>
<dbReference type="CTD" id="80168"/>
<dbReference type="Xenbase" id="XB-GENE-6040330">
    <property type="gene designation" value="mogat2"/>
</dbReference>
<dbReference type="eggNOG" id="KOG0831">
    <property type="taxonomic scope" value="Eukaryota"/>
</dbReference>
<dbReference type="HOGENOM" id="CLU_023995_0_1_1"/>
<dbReference type="InParanoid" id="Q5M8H5"/>
<dbReference type="OMA" id="RSQWMRR"/>
<dbReference type="OrthoDB" id="264532at2759"/>
<dbReference type="PhylomeDB" id="Q5M8H5"/>
<dbReference type="TreeFam" id="TF314707"/>
<dbReference type="UniPathway" id="UPA00282"/>
<dbReference type="Proteomes" id="UP000008143">
    <property type="component" value="Chromosome 3"/>
</dbReference>
<dbReference type="Bgee" id="ENSXETG00000004012">
    <property type="expression patterns" value="Expressed in lung and 7 other cell types or tissues"/>
</dbReference>
<dbReference type="GO" id="GO:1990578">
    <property type="term" value="C:perinuclear endoplasmic reticulum membrane"/>
    <property type="evidence" value="ECO:0000250"/>
    <property type="project" value="UniProtKB"/>
</dbReference>
<dbReference type="GO" id="GO:0003846">
    <property type="term" value="F:2-acylglycerol O-acyltransferase activity"/>
    <property type="evidence" value="ECO:0000250"/>
    <property type="project" value="UniProtKB"/>
</dbReference>
<dbReference type="GO" id="GO:0004144">
    <property type="term" value="F:diacylglycerol O-acyltransferase activity"/>
    <property type="evidence" value="ECO:0007669"/>
    <property type="project" value="RHEA"/>
</dbReference>
<dbReference type="GO" id="GO:0006071">
    <property type="term" value="P:glycerol metabolic process"/>
    <property type="evidence" value="ECO:0007669"/>
    <property type="project" value="UniProtKB-KW"/>
</dbReference>
<dbReference type="GO" id="GO:0006640">
    <property type="term" value="P:monoacylglycerol biosynthetic process"/>
    <property type="evidence" value="ECO:0000250"/>
    <property type="project" value="UniProtKB"/>
</dbReference>
<dbReference type="GO" id="GO:0019432">
    <property type="term" value="P:triglyceride biosynthetic process"/>
    <property type="evidence" value="ECO:0007669"/>
    <property type="project" value="UniProtKB-UniPathway"/>
</dbReference>
<dbReference type="CDD" id="cd07987">
    <property type="entry name" value="LPLAT_MGAT-like"/>
    <property type="match status" value="1"/>
</dbReference>
<dbReference type="InterPro" id="IPR007130">
    <property type="entry name" value="DAGAT"/>
</dbReference>
<dbReference type="PANTHER" id="PTHR12317:SF78">
    <property type="entry name" value="ACYLTRANSFERASE"/>
    <property type="match status" value="1"/>
</dbReference>
<dbReference type="PANTHER" id="PTHR12317">
    <property type="entry name" value="DIACYLGLYCEROL O-ACYLTRANSFERASE"/>
    <property type="match status" value="1"/>
</dbReference>
<dbReference type="Pfam" id="PF03982">
    <property type="entry name" value="DAGAT"/>
    <property type="match status" value="1"/>
</dbReference>
<dbReference type="SUPFAM" id="SSF69593">
    <property type="entry name" value="Glycerol-3-phosphate (1)-acyltransferase"/>
    <property type="match status" value="1"/>
</dbReference>
<evidence type="ECO:0000250" key="1">
    <source>
        <dbReference type="UniProtKB" id="Q3SYC2"/>
    </source>
</evidence>
<evidence type="ECO:0000250" key="2">
    <source>
        <dbReference type="UniProtKB" id="Q80W94"/>
    </source>
</evidence>
<evidence type="ECO:0000255" key="3"/>
<evidence type="ECO:0000305" key="4"/>